<evidence type="ECO:0000250" key="1"/>
<evidence type="ECO:0000250" key="2">
    <source>
        <dbReference type="UniProtKB" id="Q04636"/>
    </source>
</evidence>
<evidence type="ECO:0000256" key="3">
    <source>
        <dbReference type="SAM" id="MobiDB-lite"/>
    </source>
</evidence>
<evidence type="ECO:0000305" key="4"/>
<organism>
    <name type="scientific">Aspergillus oryzae (strain ATCC 42149 / RIB 40)</name>
    <name type="common">Yellow koji mold</name>
    <dbReference type="NCBI Taxonomy" id="510516"/>
    <lineage>
        <taxon>Eukaryota</taxon>
        <taxon>Fungi</taxon>
        <taxon>Dikarya</taxon>
        <taxon>Ascomycota</taxon>
        <taxon>Pezizomycotina</taxon>
        <taxon>Eurotiomycetes</taxon>
        <taxon>Eurotiomycetidae</taxon>
        <taxon>Eurotiales</taxon>
        <taxon>Aspergillaceae</taxon>
        <taxon>Aspergillus</taxon>
        <taxon>Aspergillus subgen. Circumdati</taxon>
    </lineage>
</organism>
<comment type="function">
    <text evidence="1">Component of the FACT complex, a general chromatin factor that acts to reorganize nucleosomes. The FACT complex is involved in multiple processes that require DNA as a template such as mRNA elongation, DNA replication and DNA repair. During transcription elongation the FACT complex acts as a histone chaperone that both destabilizes and restores nucleosomal structure. It facilitates the passage of RNA polymerase II and transcription by promoting the dissociation of one histone H2A-H2B dimer from the nucleosome, then subsequently promotes the reestablishment of the nucleosome following the passage of RNA polymerase II (By similarity).</text>
</comment>
<comment type="subunit">
    <text evidence="1">Forms a stable heterodimer with spt16. The spt16-pob3 dimer weakly associates with multiple molecules of nhp6 to form the FACT complex (By similarity).</text>
</comment>
<comment type="subcellular location">
    <subcellularLocation>
        <location evidence="2">Nucleus</location>
    </subcellularLocation>
    <subcellularLocation>
        <location evidence="2">Chromosome</location>
    </subcellularLocation>
    <text evidence="2">Colocalizes with RNA polymerase II on chromatin. Recruited to actively transcribed loci.</text>
</comment>
<comment type="miscellaneous">
    <text>In contrast to the orthologous protein in animals and plants, this protein does not contain a HMG box DNA-binding domain. This function may instead be provided by the HMG box of the associated nhp6 protein in the FACT complex of fungi.</text>
</comment>
<comment type="similarity">
    <text evidence="4">Belongs to the SSRP1 family.</text>
</comment>
<feature type="chain" id="PRO_0000245201" description="FACT complex subunit pob3">
    <location>
        <begin position="1"/>
        <end position="576"/>
    </location>
</feature>
<feature type="region of interest" description="Disordered" evidence="3">
    <location>
        <begin position="153"/>
        <end position="172"/>
    </location>
</feature>
<feature type="region of interest" description="Disordered" evidence="3">
    <location>
        <begin position="193"/>
        <end position="213"/>
    </location>
</feature>
<feature type="region of interest" description="Disordered" evidence="3">
    <location>
        <begin position="490"/>
        <end position="576"/>
    </location>
</feature>
<feature type="compositionally biased region" description="Basic and acidic residues" evidence="3">
    <location>
        <begin position="193"/>
        <end position="203"/>
    </location>
</feature>
<feature type="compositionally biased region" description="Acidic residues" evidence="3">
    <location>
        <begin position="204"/>
        <end position="213"/>
    </location>
</feature>
<feature type="compositionally biased region" description="Basic and acidic residues" evidence="3">
    <location>
        <begin position="496"/>
        <end position="505"/>
    </location>
</feature>
<feature type="compositionally biased region" description="Acidic residues" evidence="3">
    <location>
        <begin position="506"/>
        <end position="528"/>
    </location>
</feature>
<feature type="compositionally biased region" description="Acidic residues" evidence="3">
    <location>
        <begin position="542"/>
        <end position="564"/>
    </location>
</feature>
<gene>
    <name type="primary">pob3</name>
    <name type="ORF">AO090005000376</name>
</gene>
<keyword id="KW-0158">Chromosome</keyword>
<keyword id="KW-0227">DNA damage</keyword>
<keyword id="KW-0234">DNA repair</keyword>
<keyword id="KW-0235">DNA replication</keyword>
<keyword id="KW-0539">Nucleus</keyword>
<keyword id="KW-1185">Reference proteome</keyword>
<keyword id="KW-0804">Transcription</keyword>
<keyword id="KW-0805">Transcription regulation</keyword>
<sequence length="576" mass="64203">MESFDNIYLDLSKQPGKCKLAESGLGWKPSGEGETFTLDSSNVGAAQWSRAAKGFELKILSRSSGVIQLDGFDQEDFERLSKAFKIWYGINVESREHALRGWNWGKAEFTKAELSFNVQNRPAFEVPYSEISNTNLAGKNEVAVELALNTDGADANAQPAGSTKNRGRKAASGPDELVEMRFYIPGTVMKTEKGIKEENGKEENGEEEEEGEEQNAANLFYEMLMEKAEIGDVAGDTFATFLDVLHLTPRGRFDIDMYESSFRLRGKTYDYKIQYSSIKKFFLLPKNDDTHTLIVLGLDPPLRQGQTRYPFLVMQLKLDEEISLELNMTDELMETRYKDKLEPRYEEPIHQVVTKIFRGLSGKKVIMPSKDFVSHHGHSGVKCSIKANEGLLYFLDKSLIFVPKPATYIQVENIAIITMSRVGGAVSASRTFDITVSLKAGMGEHQFSNINREEQQPLEEFFKAKNIRFKNEMSDDAGALLAAALDNDVMGSSDDEGVRADRGSADEDEESIDEDFQAESESDVAEEYDSAHESSGSGSDAEMNDASDGGGDDDDDDEDVDMSEEERPKKKSKVGK</sequence>
<accession>Q2USL9</accession>
<protein>
    <recommendedName>
        <fullName>FACT complex subunit pob3</fullName>
    </recommendedName>
    <alternativeName>
        <fullName>Facilitates chromatin transcription complex subunit pob3</fullName>
    </alternativeName>
</protein>
<proteinExistence type="inferred from homology"/>
<dbReference type="EMBL" id="BA000049">
    <property type="protein sequence ID" value="BAE55446.1"/>
    <property type="molecule type" value="Genomic_DNA"/>
</dbReference>
<dbReference type="RefSeq" id="XP_001817448.1">
    <property type="nucleotide sequence ID" value="XM_001817396.2"/>
</dbReference>
<dbReference type="SMR" id="Q2USL9"/>
<dbReference type="STRING" id="510516.Q2USL9"/>
<dbReference type="EnsemblFungi" id="BAE55446">
    <property type="protein sequence ID" value="BAE55446"/>
    <property type="gene ID" value="AO090005000376"/>
</dbReference>
<dbReference type="VEuPathDB" id="FungiDB:AO090005000376"/>
<dbReference type="HOGENOM" id="CLU_017374_3_0_1"/>
<dbReference type="OMA" id="QVVTKIF"/>
<dbReference type="Proteomes" id="UP000006564">
    <property type="component" value="Chromosome 1"/>
</dbReference>
<dbReference type="GO" id="GO:0000781">
    <property type="term" value="C:chromosome, telomeric region"/>
    <property type="evidence" value="ECO:0007669"/>
    <property type="project" value="GOC"/>
</dbReference>
<dbReference type="GO" id="GO:0035101">
    <property type="term" value="C:FACT complex"/>
    <property type="evidence" value="ECO:0007669"/>
    <property type="project" value="EnsemblFungi"/>
</dbReference>
<dbReference type="GO" id="GO:0003677">
    <property type="term" value="F:DNA binding"/>
    <property type="evidence" value="ECO:0007669"/>
    <property type="project" value="InterPro"/>
</dbReference>
<dbReference type="GO" id="GO:0042393">
    <property type="term" value="F:histone binding"/>
    <property type="evidence" value="ECO:0007669"/>
    <property type="project" value="EnsemblFungi"/>
</dbReference>
<dbReference type="GO" id="GO:0031491">
    <property type="term" value="F:nucleosome binding"/>
    <property type="evidence" value="ECO:0007669"/>
    <property type="project" value="EnsemblFungi"/>
</dbReference>
<dbReference type="GO" id="GO:0006281">
    <property type="term" value="P:DNA repair"/>
    <property type="evidence" value="ECO:0007669"/>
    <property type="project" value="UniProtKB-KW"/>
</dbReference>
<dbReference type="GO" id="GO:0006335">
    <property type="term" value="P:DNA replication-dependent chromatin assembly"/>
    <property type="evidence" value="ECO:0007669"/>
    <property type="project" value="EnsemblFungi"/>
</dbReference>
<dbReference type="GO" id="GO:0006261">
    <property type="term" value="P:DNA-templated DNA replication"/>
    <property type="evidence" value="ECO:0007669"/>
    <property type="project" value="EnsemblFungi"/>
</dbReference>
<dbReference type="GO" id="GO:0034728">
    <property type="term" value="P:nucleosome organization"/>
    <property type="evidence" value="ECO:0007669"/>
    <property type="project" value="EnsemblFungi"/>
</dbReference>
<dbReference type="GO" id="GO:0031508">
    <property type="term" value="P:pericentric heterochromatin formation"/>
    <property type="evidence" value="ECO:0007669"/>
    <property type="project" value="EnsemblFungi"/>
</dbReference>
<dbReference type="GO" id="GO:0045899">
    <property type="term" value="P:positive regulation of RNA polymerase II transcription preinitiation complex assembly"/>
    <property type="evidence" value="ECO:0007669"/>
    <property type="project" value="EnsemblFungi"/>
</dbReference>
<dbReference type="GO" id="GO:0030466">
    <property type="term" value="P:silent mating-type cassette heterochromatin formation"/>
    <property type="evidence" value="ECO:0007669"/>
    <property type="project" value="EnsemblFungi"/>
</dbReference>
<dbReference type="GO" id="GO:0031509">
    <property type="term" value="P:subtelomeric heterochromatin formation"/>
    <property type="evidence" value="ECO:0007669"/>
    <property type="project" value="EnsemblFungi"/>
</dbReference>
<dbReference type="CDD" id="cd13230">
    <property type="entry name" value="PH1_SSRP1-like"/>
    <property type="match status" value="1"/>
</dbReference>
<dbReference type="CDD" id="cd13231">
    <property type="entry name" value="PH2_SSRP1-like"/>
    <property type="match status" value="1"/>
</dbReference>
<dbReference type="CDD" id="cd13229">
    <property type="entry name" value="PH_TFIIH"/>
    <property type="match status" value="1"/>
</dbReference>
<dbReference type="FunFam" id="2.30.29.220:FF:000003">
    <property type="entry name" value="FACT complex subunit POB3"/>
    <property type="match status" value="1"/>
</dbReference>
<dbReference type="FunFam" id="2.30.29.30:FF:000146">
    <property type="entry name" value="FACT complex subunit POB3"/>
    <property type="match status" value="1"/>
</dbReference>
<dbReference type="FunFam" id="2.30.29.30:FF:000310">
    <property type="entry name" value="FACT complex subunit POB3"/>
    <property type="match status" value="1"/>
</dbReference>
<dbReference type="FunFam" id="2.30.29.150:FF:000001">
    <property type="entry name" value="Fact complex subunit ssrp1"/>
    <property type="match status" value="1"/>
</dbReference>
<dbReference type="Gene3D" id="2.30.29.150">
    <property type="match status" value="1"/>
</dbReference>
<dbReference type="Gene3D" id="2.30.29.30">
    <property type="entry name" value="Pleckstrin-homology domain (PH domain)/Phosphotyrosine-binding domain (PTB)"/>
    <property type="match status" value="2"/>
</dbReference>
<dbReference type="Gene3D" id="2.30.29.220">
    <property type="entry name" value="Structure-specific recognition protein (SSRP1)"/>
    <property type="match status" value="1"/>
</dbReference>
<dbReference type="InterPro" id="IPR011993">
    <property type="entry name" value="PH-like_dom_sf"/>
</dbReference>
<dbReference type="InterPro" id="IPR013719">
    <property type="entry name" value="RTT106/SPT16-like_middle_dom"/>
</dbReference>
<dbReference type="InterPro" id="IPR050454">
    <property type="entry name" value="RTT106/SSRP1_HistChap/FACT"/>
</dbReference>
<dbReference type="InterPro" id="IPR048993">
    <property type="entry name" value="SSRP1-like_PH1"/>
</dbReference>
<dbReference type="InterPro" id="IPR000969">
    <property type="entry name" value="SSRP1/POB3"/>
</dbReference>
<dbReference type="InterPro" id="IPR035417">
    <property type="entry name" value="SSRP1/POB3_N"/>
</dbReference>
<dbReference type="InterPro" id="IPR024954">
    <property type="entry name" value="SSRP1_DD"/>
</dbReference>
<dbReference type="InterPro" id="IPR038167">
    <property type="entry name" value="SSRP1_sf"/>
</dbReference>
<dbReference type="PANTHER" id="PTHR45849">
    <property type="entry name" value="FACT COMPLEX SUBUNIT SSRP1"/>
    <property type="match status" value="1"/>
</dbReference>
<dbReference type="PANTHER" id="PTHR45849:SF1">
    <property type="entry name" value="FACT COMPLEX SUBUNIT SSRP1"/>
    <property type="match status" value="1"/>
</dbReference>
<dbReference type="Pfam" id="PF21103">
    <property type="entry name" value="PH1_SSRP1-like"/>
    <property type="match status" value="1"/>
</dbReference>
<dbReference type="Pfam" id="PF17292">
    <property type="entry name" value="POB3_N"/>
    <property type="match status" value="1"/>
</dbReference>
<dbReference type="Pfam" id="PF08512">
    <property type="entry name" value="Rttp106-like_middle"/>
    <property type="match status" value="1"/>
</dbReference>
<dbReference type="Pfam" id="PF03531">
    <property type="entry name" value="SSrecog"/>
    <property type="match status" value="1"/>
</dbReference>
<dbReference type="PRINTS" id="PR00887">
    <property type="entry name" value="SSRCOGNITION"/>
</dbReference>
<dbReference type="SMART" id="SM01287">
    <property type="entry name" value="Rtt106"/>
    <property type="match status" value="1"/>
</dbReference>
<dbReference type="SUPFAM" id="SSF50729">
    <property type="entry name" value="PH domain-like"/>
    <property type="match status" value="1"/>
</dbReference>
<reference key="1">
    <citation type="journal article" date="2005" name="Nature">
        <title>Genome sequencing and analysis of Aspergillus oryzae.</title>
        <authorList>
            <person name="Machida M."/>
            <person name="Asai K."/>
            <person name="Sano M."/>
            <person name="Tanaka T."/>
            <person name="Kumagai T."/>
            <person name="Terai G."/>
            <person name="Kusumoto K."/>
            <person name="Arima T."/>
            <person name="Akita O."/>
            <person name="Kashiwagi Y."/>
            <person name="Abe K."/>
            <person name="Gomi K."/>
            <person name="Horiuchi H."/>
            <person name="Kitamoto K."/>
            <person name="Kobayashi T."/>
            <person name="Takeuchi M."/>
            <person name="Denning D.W."/>
            <person name="Galagan J.E."/>
            <person name="Nierman W.C."/>
            <person name="Yu J."/>
            <person name="Archer D.B."/>
            <person name="Bennett J.W."/>
            <person name="Bhatnagar D."/>
            <person name="Cleveland T.E."/>
            <person name="Fedorova N.D."/>
            <person name="Gotoh O."/>
            <person name="Horikawa H."/>
            <person name="Hosoyama A."/>
            <person name="Ichinomiya M."/>
            <person name="Igarashi R."/>
            <person name="Iwashita K."/>
            <person name="Juvvadi P.R."/>
            <person name="Kato M."/>
            <person name="Kato Y."/>
            <person name="Kin T."/>
            <person name="Kokubun A."/>
            <person name="Maeda H."/>
            <person name="Maeyama N."/>
            <person name="Maruyama J."/>
            <person name="Nagasaki H."/>
            <person name="Nakajima T."/>
            <person name="Oda K."/>
            <person name="Okada K."/>
            <person name="Paulsen I."/>
            <person name="Sakamoto K."/>
            <person name="Sawano T."/>
            <person name="Takahashi M."/>
            <person name="Takase K."/>
            <person name="Terabayashi Y."/>
            <person name="Wortman J.R."/>
            <person name="Yamada O."/>
            <person name="Yamagata Y."/>
            <person name="Anazawa H."/>
            <person name="Hata Y."/>
            <person name="Koide Y."/>
            <person name="Komori T."/>
            <person name="Koyama Y."/>
            <person name="Minetoki T."/>
            <person name="Suharnan S."/>
            <person name="Tanaka A."/>
            <person name="Isono K."/>
            <person name="Kuhara S."/>
            <person name="Ogasawara N."/>
            <person name="Kikuchi H."/>
        </authorList>
    </citation>
    <scope>NUCLEOTIDE SEQUENCE [LARGE SCALE GENOMIC DNA]</scope>
    <source>
        <strain>ATCC 42149 / RIB 40</strain>
    </source>
</reference>
<name>POB3_ASPOR</name>